<sequence>MSVACTIRRHIIEKLHVLNIDNFVVTNESILAKLIVDYPNNPDHGDLYTNAALILSKYIKKNPMDIAKILVDEFSSIKEISDINVVKPGFINFNISLDVWYEIIISINRLKEKFGHVNFGNGKRVNIEFVSANPTGPMHIGHARGAIFGDVLANLLERVGYEVVREYYINDAGAQVDVLVESVYLRYKEVLGENIVIGSGLYPGLYLKDIGKLLYQEYGSGLLGMDYSQRRRIIRDVSLMYLMKLIKEDLALLGIKHDIFTSESQLQKDNIVQKCVELLQEKQLIYYGTLDQPKGTEGINWKPRTQMLFKSTDFGDDVDRALQKADGSWTYFANDIAYHFYKISRGFQHMILELGSDHIGYVKRLKAAVKALSDGNATIDIKLHSIVNFLDNGAQVKMSKRSGEFLTIKDVIEKVGKDVVRFIMLTRKSDVVLDFDFAKVVEQSKNNPVFYVQYAHARVHSLIRNAPKILEIELVDFSVLSSKEEILLIKLLAKWQDIVEISAKTAEPHRITFYLIEVAEAFHALWGYGNKSTDMRFIVDNNINLTSARIYLAKSVGYVIASGLTIFSIVPLTEMK</sequence>
<proteinExistence type="inferred from homology"/>
<feature type="chain" id="PRO_0000242019" description="Arginine--tRNA ligase">
    <location>
        <begin position="1"/>
        <end position="576"/>
    </location>
</feature>
<feature type="short sequence motif" description="'HIGH' region">
    <location>
        <begin position="132"/>
        <end position="142"/>
    </location>
</feature>
<name>SYR_EHRRG</name>
<accession>Q5FH87</accession>
<protein>
    <recommendedName>
        <fullName evidence="1">Arginine--tRNA ligase</fullName>
        <ecNumber evidence="1">6.1.1.19</ecNumber>
    </recommendedName>
    <alternativeName>
        <fullName evidence="1">Arginyl-tRNA synthetase</fullName>
        <shortName evidence="1">ArgRS</shortName>
    </alternativeName>
</protein>
<comment type="catalytic activity">
    <reaction evidence="1">
        <text>tRNA(Arg) + L-arginine + ATP = L-arginyl-tRNA(Arg) + AMP + diphosphate</text>
        <dbReference type="Rhea" id="RHEA:20301"/>
        <dbReference type="Rhea" id="RHEA-COMP:9658"/>
        <dbReference type="Rhea" id="RHEA-COMP:9673"/>
        <dbReference type="ChEBI" id="CHEBI:30616"/>
        <dbReference type="ChEBI" id="CHEBI:32682"/>
        <dbReference type="ChEBI" id="CHEBI:33019"/>
        <dbReference type="ChEBI" id="CHEBI:78442"/>
        <dbReference type="ChEBI" id="CHEBI:78513"/>
        <dbReference type="ChEBI" id="CHEBI:456215"/>
        <dbReference type="EC" id="6.1.1.19"/>
    </reaction>
</comment>
<comment type="subunit">
    <text evidence="1">Monomer.</text>
</comment>
<comment type="subcellular location">
    <subcellularLocation>
        <location evidence="1">Cytoplasm</location>
    </subcellularLocation>
</comment>
<comment type="similarity">
    <text evidence="1">Belongs to the class-I aminoacyl-tRNA synthetase family.</text>
</comment>
<comment type="sequence caution" evidence="2">
    <conflict type="erroneous initiation">
        <sequence resource="EMBL-CDS" id="CAI27956"/>
    </conflict>
</comment>
<reference key="1">
    <citation type="journal article" date="2006" name="J. Bacteriol.">
        <title>Comparative genomic analysis of three strains of Ehrlichia ruminantium reveals an active process of genome size plasticity.</title>
        <authorList>
            <person name="Frutos R."/>
            <person name="Viari A."/>
            <person name="Ferraz C."/>
            <person name="Morgat A."/>
            <person name="Eychenie S."/>
            <person name="Kandassamy Y."/>
            <person name="Chantal I."/>
            <person name="Bensaid A."/>
            <person name="Coissac E."/>
            <person name="Vachiery N."/>
            <person name="Demaille J."/>
            <person name="Martinez D."/>
        </authorList>
    </citation>
    <scope>NUCLEOTIDE SEQUENCE [LARGE SCALE GENOMIC DNA]</scope>
    <source>
        <strain>Gardel</strain>
    </source>
</reference>
<dbReference type="EC" id="6.1.1.19" evidence="1"/>
<dbReference type="EMBL" id="CR925677">
    <property type="protein sequence ID" value="CAI27956.1"/>
    <property type="status" value="ALT_INIT"/>
    <property type="molecule type" value="Genomic_DNA"/>
</dbReference>
<dbReference type="RefSeq" id="WP_044157001.1">
    <property type="nucleotide sequence ID" value="NC_006831.1"/>
</dbReference>
<dbReference type="SMR" id="Q5FH87"/>
<dbReference type="KEGG" id="erg:ERGA_CDS_05040"/>
<dbReference type="HOGENOM" id="CLU_006406_0_1_5"/>
<dbReference type="OrthoDB" id="9803211at2"/>
<dbReference type="Proteomes" id="UP000000533">
    <property type="component" value="Chromosome"/>
</dbReference>
<dbReference type="GO" id="GO:0005737">
    <property type="term" value="C:cytoplasm"/>
    <property type="evidence" value="ECO:0007669"/>
    <property type="project" value="UniProtKB-SubCell"/>
</dbReference>
<dbReference type="GO" id="GO:0004814">
    <property type="term" value="F:arginine-tRNA ligase activity"/>
    <property type="evidence" value="ECO:0007669"/>
    <property type="project" value="UniProtKB-UniRule"/>
</dbReference>
<dbReference type="GO" id="GO:0005524">
    <property type="term" value="F:ATP binding"/>
    <property type="evidence" value="ECO:0007669"/>
    <property type="project" value="UniProtKB-UniRule"/>
</dbReference>
<dbReference type="GO" id="GO:0006420">
    <property type="term" value="P:arginyl-tRNA aminoacylation"/>
    <property type="evidence" value="ECO:0007669"/>
    <property type="project" value="UniProtKB-UniRule"/>
</dbReference>
<dbReference type="CDD" id="cd00671">
    <property type="entry name" value="ArgRS_core"/>
    <property type="match status" value="1"/>
</dbReference>
<dbReference type="Gene3D" id="3.30.1360.70">
    <property type="entry name" value="Arginyl tRNA synthetase N-terminal domain"/>
    <property type="match status" value="1"/>
</dbReference>
<dbReference type="Gene3D" id="3.40.50.620">
    <property type="entry name" value="HUPs"/>
    <property type="match status" value="1"/>
</dbReference>
<dbReference type="Gene3D" id="1.10.730.10">
    <property type="entry name" value="Isoleucyl-tRNA Synthetase, Domain 1"/>
    <property type="match status" value="1"/>
</dbReference>
<dbReference type="HAMAP" id="MF_00123">
    <property type="entry name" value="Arg_tRNA_synth"/>
    <property type="match status" value="1"/>
</dbReference>
<dbReference type="InterPro" id="IPR001412">
    <property type="entry name" value="aa-tRNA-synth_I_CS"/>
</dbReference>
<dbReference type="InterPro" id="IPR001278">
    <property type="entry name" value="Arg-tRNA-ligase"/>
</dbReference>
<dbReference type="InterPro" id="IPR005148">
    <property type="entry name" value="Arg-tRNA-synth_N"/>
</dbReference>
<dbReference type="InterPro" id="IPR036695">
    <property type="entry name" value="Arg-tRNA-synth_N_sf"/>
</dbReference>
<dbReference type="InterPro" id="IPR035684">
    <property type="entry name" value="ArgRS_core"/>
</dbReference>
<dbReference type="InterPro" id="IPR008909">
    <property type="entry name" value="DALR_anticod-bd"/>
</dbReference>
<dbReference type="InterPro" id="IPR014729">
    <property type="entry name" value="Rossmann-like_a/b/a_fold"/>
</dbReference>
<dbReference type="InterPro" id="IPR009080">
    <property type="entry name" value="tRNAsynth_Ia_anticodon-bd"/>
</dbReference>
<dbReference type="NCBIfam" id="TIGR00456">
    <property type="entry name" value="argS"/>
    <property type="match status" value="1"/>
</dbReference>
<dbReference type="PANTHER" id="PTHR11956:SF5">
    <property type="entry name" value="ARGININE--TRNA LIGASE, CYTOPLASMIC"/>
    <property type="match status" value="1"/>
</dbReference>
<dbReference type="PANTHER" id="PTHR11956">
    <property type="entry name" value="ARGINYL-TRNA SYNTHETASE"/>
    <property type="match status" value="1"/>
</dbReference>
<dbReference type="Pfam" id="PF03485">
    <property type="entry name" value="Arg_tRNA_synt_N"/>
    <property type="match status" value="1"/>
</dbReference>
<dbReference type="Pfam" id="PF05746">
    <property type="entry name" value="DALR_1"/>
    <property type="match status" value="1"/>
</dbReference>
<dbReference type="Pfam" id="PF00750">
    <property type="entry name" value="tRNA-synt_1d"/>
    <property type="match status" value="1"/>
</dbReference>
<dbReference type="PRINTS" id="PR01038">
    <property type="entry name" value="TRNASYNTHARG"/>
</dbReference>
<dbReference type="SMART" id="SM01016">
    <property type="entry name" value="Arg_tRNA_synt_N"/>
    <property type="match status" value="1"/>
</dbReference>
<dbReference type="SMART" id="SM00836">
    <property type="entry name" value="DALR_1"/>
    <property type="match status" value="1"/>
</dbReference>
<dbReference type="SUPFAM" id="SSF47323">
    <property type="entry name" value="Anticodon-binding domain of a subclass of class I aminoacyl-tRNA synthetases"/>
    <property type="match status" value="1"/>
</dbReference>
<dbReference type="SUPFAM" id="SSF55190">
    <property type="entry name" value="Arginyl-tRNA synthetase (ArgRS), N-terminal 'additional' domain"/>
    <property type="match status" value="1"/>
</dbReference>
<dbReference type="SUPFAM" id="SSF52374">
    <property type="entry name" value="Nucleotidylyl transferase"/>
    <property type="match status" value="1"/>
</dbReference>
<dbReference type="PROSITE" id="PS00178">
    <property type="entry name" value="AA_TRNA_LIGASE_I"/>
    <property type="match status" value="1"/>
</dbReference>
<evidence type="ECO:0000255" key="1">
    <source>
        <dbReference type="HAMAP-Rule" id="MF_00123"/>
    </source>
</evidence>
<evidence type="ECO:0000305" key="2"/>
<keyword id="KW-0030">Aminoacyl-tRNA synthetase</keyword>
<keyword id="KW-0067">ATP-binding</keyword>
<keyword id="KW-0963">Cytoplasm</keyword>
<keyword id="KW-0436">Ligase</keyword>
<keyword id="KW-0547">Nucleotide-binding</keyword>
<keyword id="KW-0648">Protein biosynthesis</keyword>
<organism>
    <name type="scientific">Ehrlichia ruminantium (strain Gardel)</name>
    <dbReference type="NCBI Taxonomy" id="302409"/>
    <lineage>
        <taxon>Bacteria</taxon>
        <taxon>Pseudomonadati</taxon>
        <taxon>Pseudomonadota</taxon>
        <taxon>Alphaproteobacteria</taxon>
        <taxon>Rickettsiales</taxon>
        <taxon>Anaplasmataceae</taxon>
        <taxon>Ehrlichia</taxon>
    </lineage>
</organism>
<gene>
    <name evidence="1" type="primary">argS</name>
    <name type="ordered locus">ERGA_CDS_05040</name>
</gene>